<feature type="chain" id="PRO_0000343968" description="Cell division inhibitor SulA">
    <location>
        <begin position="1"/>
        <end position="177"/>
    </location>
</feature>
<feature type="region of interest" description="FtsZ binding" evidence="1">
    <location>
        <begin position="112"/>
        <end position="118"/>
    </location>
</feature>
<feature type="region of interest" description="Lon protease binding" evidence="1">
    <location>
        <begin position="170"/>
        <end position="177"/>
    </location>
</feature>
<feature type="site" description="Essential for degradation by Lon protease" evidence="1">
    <location>
        <position position="177"/>
    </location>
</feature>
<protein>
    <recommendedName>
        <fullName evidence="1">Cell division inhibitor SulA</fullName>
    </recommendedName>
</protein>
<comment type="function">
    <text evidence="1">Component of the SOS system and an inhibitor of cell division. Accumulation of SulA causes rapid cessation of cell division and the appearance of long, non-septate filaments. In the presence of GTP, binds a polymerization-competent form of FtsZ in a 1:1 ratio, thus inhibiting FtsZ polymerization and therefore preventing it from participating in the assembly of the Z ring. This mechanism prevents the premature segregation of damaged DNA to daughter cells during cell division.</text>
</comment>
<comment type="subunit">
    <text evidence="1">Interacts with FtsZ.</text>
</comment>
<comment type="induction">
    <text evidence="1">By DNA damage, as part of the SOS response.</text>
</comment>
<comment type="PTM">
    <text evidence="1">Is rapidly cleaved and degraded by the Lon protease once DNA damage is repaired.</text>
</comment>
<comment type="similarity">
    <text evidence="1">Belongs to the SulA family.</text>
</comment>
<name>SULA_PHOLL</name>
<proteinExistence type="inferred from homology"/>
<organism>
    <name type="scientific">Photorhabdus laumondii subsp. laumondii (strain DSM 15139 / CIP 105565 / TT01)</name>
    <name type="common">Photorhabdus luminescens subsp. laumondii</name>
    <dbReference type="NCBI Taxonomy" id="243265"/>
    <lineage>
        <taxon>Bacteria</taxon>
        <taxon>Pseudomonadati</taxon>
        <taxon>Pseudomonadota</taxon>
        <taxon>Gammaproteobacteria</taxon>
        <taxon>Enterobacterales</taxon>
        <taxon>Morganellaceae</taxon>
        <taxon>Photorhabdus</taxon>
    </lineage>
</organism>
<evidence type="ECO:0000255" key="1">
    <source>
        <dbReference type="HAMAP-Rule" id="MF_01179"/>
    </source>
</evidence>
<gene>
    <name evidence="1" type="primary">sulA</name>
    <name type="ordered locus">plu1776</name>
</gene>
<sequence>MGIQSSWFYSSKHQSAKREGMVKEGKGGIVSELIYSNNQYSDNQYSDNQAVINRILLPLLRQSGNEARWLLWVSPHKKLSRQWLINSGLPLDKIIQLNRMSSITTVEAMERALASGNYSVVLGWLPTLSGKDTVRLQAAAQKGNALGFIMRPQDVSKETSRAESRSDLLKIHSIHYH</sequence>
<dbReference type="EMBL" id="BX571865">
    <property type="protein sequence ID" value="CAE14069.1"/>
    <property type="molecule type" value="Genomic_DNA"/>
</dbReference>
<dbReference type="RefSeq" id="WP_011146054.1">
    <property type="nucleotide sequence ID" value="NC_005126.1"/>
</dbReference>
<dbReference type="SMR" id="Q7N601"/>
<dbReference type="STRING" id="243265.plu1776"/>
<dbReference type="GeneID" id="48848056"/>
<dbReference type="KEGG" id="plu:plu1776"/>
<dbReference type="eggNOG" id="COG5404">
    <property type="taxonomic scope" value="Bacteria"/>
</dbReference>
<dbReference type="HOGENOM" id="CLU_118972_0_0_6"/>
<dbReference type="OrthoDB" id="6464784at2"/>
<dbReference type="Proteomes" id="UP000002514">
    <property type="component" value="Chromosome"/>
</dbReference>
<dbReference type="GO" id="GO:0000917">
    <property type="term" value="P:division septum assembly"/>
    <property type="evidence" value="ECO:0007669"/>
    <property type="project" value="UniProtKB-KW"/>
</dbReference>
<dbReference type="GO" id="GO:0006281">
    <property type="term" value="P:DNA repair"/>
    <property type="evidence" value="ECO:0007669"/>
    <property type="project" value="TreeGrafter"/>
</dbReference>
<dbReference type="GO" id="GO:0051782">
    <property type="term" value="P:negative regulation of cell division"/>
    <property type="evidence" value="ECO:0007669"/>
    <property type="project" value="UniProtKB-UniRule"/>
</dbReference>
<dbReference type="GO" id="GO:0009432">
    <property type="term" value="P:SOS response"/>
    <property type="evidence" value="ECO:0007669"/>
    <property type="project" value="UniProtKB-UniRule"/>
</dbReference>
<dbReference type="Gene3D" id="3.40.50.300">
    <property type="entry name" value="P-loop containing nucleotide triphosphate hydrolases"/>
    <property type="match status" value="1"/>
</dbReference>
<dbReference type="HAMAP" id="MF_01179">
    <property type="entry name" value="SulA"/>
    <property type="match status" value="1"/>
</dbReference>
<dbReference type="InterPro" id="IPR004596">
    <property type="entry name" value="Cell_div_suppressor_SulA"/>
</dbReference>
<dbReference type="InterPro" id="IPR027417">
    <property type="entry name" value="P-loop_NTPase"/>
</dbReference>
<dbReference type="InterPro" id="IPR050356">
    <property type="entry name" value="SulA_CellDiv_inhibitor"/>
</dbReference>
<dbReference type="InterPro" id="IPR047696">
    <property type="entry name" value="SulA_enterobact"/>
</dbReference>
<dbReference type="NCBIfam" id="NF007892">
    <property type="entry name" value="PRK10595.1"/>
    <property type="match status" value="1"/>
</dbReference>
<dbReference type="NCBIfam" id="TIGR00623">
    <property type="entry name" value="SOS_SulA_coli"/>
    <property type="match status" value="1"/>
</dbReference>
<dbReference type="PANTHER" id="PTHR35369">
    <property type="entry name" value="BLR3025 PROTEIN-RELATED"/>
    <property type="match status" value="1"/>
</dbReference>
<dbReference type="PANTHER" id="PTHR35369:SF4">
    <property type="entry name" value="CELL DIVISION INHIBITOR SULA"/>
    <property type="match status" value="1"/>
</dbReference>
<dbReference type="Pfam" id="PF03846">
    <property type="entry name" value="SulA"/>
    <property type="match status" value="1"/>
</dbReference>
<dbReference type="PIRSF" id="PIRSF003093">
    <property type="entry name" value="SulA"/>
    <property type="match status" value="1"/>
</dbReference>
<dbReference type="SUPFAM" id="SSF52540">
    <property type="entry name" value="P-loop containing nucleoside triphosphate hydrolases"/>
    <property type="match status" value="1"/>
</dbReference>
<accession>Q7N601</accession>
<reference key="1">
    <citation type="journal article" date="2003" name="Nat. Biotechnol.">
        <title>The genome sequence of the entomopathogenic bacterium Photorhabdus luminescens.</title>
        <authorList>
            <person name="Duchaud E."/>
            <person name="Rusniok C."/>
            <person name="Frangeul L."/>
            <person name="Buchrieser C."/>
            <person name="Givaudan A."/>
            <person name="Taourit S."/>
            <person name="Bocs S."/>
            <person name="Boursaux-Eude C."/>
            <person name="Chandler M."/>
            <person name="Charles J.-F."/>
            <person name="Dassa E."/>
            <person name="Derose R."/>
            <person name="Derzelle S."/>
            <person name="Freyssinet G."/>
            <person name="Gaudriault S."/>
            <person name="Medigue C."/>
            <person name="Lanois A."/>
            <person name="Powell K."/>
            <person name="Siguier P."/>
            <person name="Vincent R."/>
            <person name="Wingate V."/>
            <person name="Zouine M."/>
            <person name="Glaser P."/>
            <person name="Boemare N."/>
            <person name="Danchin A."/>
            <person name="Kunst F."/>
        </authorList>
    </citation>
    <scope>NUCLEOTIDE SEQUENCE [LARGE SCALE GENOMIC DNA]</scope>
    <source>
        <strain>DSM 15139 / CIP 105565 / TT01</strain>
    </source>
</reference>
<keyword id="KW-0131">Cell cycle</keyword>
<keyword id="KW-0132">Cell division</keyword>
<keyword id="KW-0227">DNA damage</keyword>
<keyword id="KW-1185">Reference proteome</keyword>
<keyword id="KW-0717">Septation</keyword>
<keyword id="KW-0742">SOS response</keyword>